<name>HIS4_THEPX</name>
<reference key="1">
    <citation type="submission" date="2008-01" db="EMBL/GenBank/DDBJ databases">
        <title>Complete sequence of Thermoanaerobacter sp. X514.</title>
        <authorList>
            <consortium name="US DOE Joint Genome Institute"/>
            <person name="Copeland A."/>
            <person name="Lucas S."/>
            <person name="Lapidus A."/>
            <person name="Barry K."/>
            <person name="Glavina del Rio T."/>
            <person name="Dalin E."/>
            <person name="Tice H."/>
            <person name="Pitluck S."/>
            <person name="Bruce D."/>
            <person name="Goodwin L."/>
            <person name="Saunders E."/>
            <person name="Brettin T."/>
            <person name="Detter J.C."/>
            <person name="Han C."/>
            <person name="Schmutz J."/>
            <person name="Larimer F."/>
            <person name="Land M."/>
            <person name="Hauser L."/>
            <person name="Kyrpides N."/>
            <person name="Kim E."/>
            <person name="Hemme C."/>
            <person name="Fields M.W."/>
            <person name="He Z."/>
            <person name="Zhou J."/>
            <person name="Richardson P."/>
        </authorList>
    </citation>
    <scope>NUCLEOTIDE SEQUENCE [LARGE SCALE GENOMIC DNA]</scope>
    <source>
        <strain>X514</strain>
    </source>
</reference>
<evidence type="ECO:0000255" key="1">
    <source>
        <dbReference type="HAMAP-Rule" id="MF_01014"/>
    </source>
</evidence>
<keyword id="KW-0028">Amino-acid biosynthesis</keyword>
<keyword id="KW-0963">Cytoplasm</keyword>
<keyword id="KW-0368">Histidine biosynthesis</keyword>
<keyword id="KW-0413">Isomerase</keyword>
<proteinExistence type="inferred from homology"/>
<accession>B0K628</accession>
<protein>
    <recommendedName>
        <fullName evidence="1">1-(5-phosphoribosyl)-5-[(5-phosphoribosylamino)methylideneamino] imidazole-4-carboxamide isomerase</fullName>
        <ecNumber evidence="1">5.3.1.16</ecNumber>
    </recommendedName>
    <alternativeName>
        <fullName evidence="1">Phosphoribosylformimino-5-aminoimidazole carboxamide ribotide isomerase</fullName>
    </alternativeName>
</protein>
<gene>
    <name evidence="1" type="primary">hisA</name>
    <name type="ordered locus">Teth514_1005</name>
</gene>
<dbReference type="EC" id="5.3.1.16" evidence="1"/>
<dbReference type="EMBL" id="CP000923">
    <property type="protein sequence ID" value="ABY92304.1"/>
    <property type="molecule type" value="Genomic_DNA"/>
</dbReference>
<dbReference type="RefSeq" id="WP_009052788.1">
    <property type="nucleotide sequence ID" value="NC_010320.1"/>
</dbReference>
<dbReference type="SMR" id="B0K628"/>
<dbReference type="KEGG" id="tex:Teth514_1005"/>
<dbReference type="HOGENOM" id="CLU_048577_1_1_9"/>
<dbReference type="UniPathway" id="UPA00031">
    <property type="reaction ID" value="UER00009"/>
</dbReference>
<dbReference type="Proteomes" id="UP000002155">
    <property type="component" value="Chromosome"/>
</dbReference>
<dbReference type="GO" id="GO:0005737">
    <property type="term" value="C:cytoplasm"/>
    <property type="evidence" value="ECO:0007669"/>
    <property type="project" value="UniProtKB-SubCell"/>
</dbReference>
<dbReference type="GO" id="GO:0003949">
    <property type="term" value="F:1-(5-phosphoribosyl)-5-[(5-phosphoribosylamino)methylideneamino]imidazole-4-carboxamide isomerase activity"/>
    <property type="evidence" value="ECO:0007669"/>
    <property type="project" value="UniProtKB-UniRule"/>
</dbReference>
<dbReference type="GO" id="GO:0000105">
    <property type="term" value="P:L-histidine biosynthetic process"/>
    <property type="evidence" value="ECO:0007669"/>
    <property type="project" value="UniProtKB-UniRule"/>
</dbReference>
<dbReference type="GO" id="GO:0000162">
    <property type="term" value="P:L-tryptophan biosynthetic process"/>
    <property type="evidence" value="ECO:0007669"/>
    <property type="project" value="TreeGrafter"/>
</dbReference>
<dbReference type="CDD" id="cd04732">
    <property type="entry name" value="HisA"/>
    <property type="match status" value="1"/>
</dbReference>
<dbReference type="FunFam" id="3.20.20.70:FF:000009">
    <property type="entry name" value="1-(5-phosphoribosyl)-5-[(5-phosphoribosylamino)methylideneamino] imidazole-4-carboxamide isomerase"/>
    <property type="match status" value="1"/>
</dbReference>
<dbReference type="Gene3D" id="3.20.20.70">
    <property type="entry name" value="Aldolase class I"/>
    <property type="match status" value="1"/>
</dbReference>
<dbReference type="HAMAP" id="MF_01014">
    <property type="entry name" value="HisA"/>
    <property type="match status" value="1"/>
</dbReference>
<dbReference type="InterPro" id="IPR013785">
    <property type="entry name" value="Aldolase_TIM"/>
</dbReference>
<dbReference type="InterPro" id="IPR006062">
    <property type="entry name" value="His_biosynth"/>
</dbReference>
<dbReference type="InterPro" id="IPR006063">
    <property type="entry name" value="HisA_bact_arch"/>
</dbReference>
<dbReference type="InterPro" id="IPR044524">
    <property type="entry name" value="Isoase_HisA-like"/>
</dbReference>
<dbReference type="InterPro" id="IPR023016">
    <property type="entry name" value="Isoase_HisA-like_bact"/>
</dbReference>
<dbReference type="InterPro" id="IPR011060">
    <property type="entry name" value="RibuloseP-bd_barrel"/>
</dbReference>
<dbReference type="NCBIfam" id="TIGR00007">
    <property type="entry name" value="1-(5-phosphoribosyl)-5-[(5-phosphoribosylamino)methylideneamino]imidazole-4-carboxamide isomerase"/>
    <property type="match status" value="1"/>
</dbReference>
<dbReference type="PANTHER" id="PTHR43090">
    <property type="entry name" value="1-(5-PHOSPHORIBOSYL)-5-[(5-PHOSPHORIBOSYLAMINO)METHYLIDENEAMINO] IMIDAZOLE-4-CARBOXAMIDE ISOMERASE"/>
    <property type="match status" value="1"/>
</dbReference>
<dbReference type="PANTHER" id="PTHR43090:SF2">
    <property type="entry name" value="1-(5-PHOSPHORIBOSYL)-5-[(5-PHOSPHORIBOSYLAMINO)METHYLIDENEAMINO] IMIDAZOLE-4-CARBOXAMIDE ISOMERASE"/>
    <property type="match status" value="1"/>
</dbReference>
<dbReference type="Pfam" id="PF00977">
    <property type="entry name" value="His_biosynth"/>
    <property type="match status" value="1"/>
</dbReference>
<dbReference type="SUPFAM" id="SSF51366">
    <property type="entry name" value="Ribulose-phoshate binding barrel"/>
    <property type="match status" value="1"/>
</dbReference>
<comment type="catalytic activity">
    <reaction evidence="1">
        <text>1-(5-phospho-beta-D-ribosyl)-5-[(5-phospho-beta-D-ribosylamino)methylideneamino]imidazole-4-carboxamide = 5-[(5-phospho-1-deoxy-D-ribulos-1-ylimino)methylamino]-1-(5-phospho-beta-D-ribosyl)imidazole-4-carboxamide</text>
        <dbReference type="Rhea" id="RHEA:15469"/>
        <dbReference type="ChEBI" id="CHEBI:58435"/>
        <dbReference type="ChEBI" id="CHEBI:58525"/>
        <dbReference type="EC" id="5.3.1.16"/>
    </reaction>
</comment>
<comment type="pathway">
    <text evidence="1">Amino-acid biosynthesis; L-histidine biosynthesis; L-histidine from 5-phospho-alpha-D-ribose 1-diphosphate: step 4/9.</text>
</comment>
<comment type="subcellular location">
    <subcellularLocation>
        <location evidence="1">Cytoplasm</location>
    </subcellularLocation>
</comment>
<comment type="similarity">
    <text evidence="1">Belongs to the HisA/HisF family.</text>
</comment>
<sequence length="235" mass="25803">MVLIPAIDIMEEKCVRLTKGDFNTKEVYYENPVDVAKMWEELGAKRIHVVDLDGAKQGHLVNGNIIEQIIKSCKAEIEVGGGIRNRETIDYLFSVGVKYVILGSAAIYDKDLLLYSLSNYGERTIVGIDSKNGEVAVSGWLEKTKIKDMELAKKMKEIGVKTIIFTDISKDGTLNGPNFKALENILKTGVQVIASGGISSIEDLKKLKEMGAYGAIIGKALYIGKINFKSALEVI</sequence>
<feature type="chain" id="PRO_1000190565" description="1-(5-phosphoribosyl)-5-[(5-phosphoribosylamino)methylideneamino] imidazole-4-carboxamide isomerase">
    <location>
        <begin position="1"/>
        <end position="235"/>
    </location>
</feature>
<feature type="active site" description="Proton acceptor" evidence="1">
    <location>
        <position position="8"/>
    </location>
</feature>
<feature type="active site" description="Proton donor" evidence="1">
    <location>
        <position position="129"/>
    </location>
</feature>
<organism>
    <name type="scientific">Thermoanaerobacter sp. (strain X514)</name>
    <dbReference type="NCBI Taxonomy" id="399726"/>
    <lineage>
        <taxon>Bacteria</taxon>
        <taxon>Bacillati</taxon>
        <taxon>Bacillota</taxon>
        <taxon>Clostridia</taxon>
        <taxon>Thermoanaerobacterales</taxon>
        <taxon>Thermoanaerobacteraceae</taxon>
        <taxon>Thermoanaerobacter</taxon>
    </lineage>
</organism>